<protein>
    <recommendedName>
        <fullName>Radial spoke head protein 9 homolog</fullName>
    </recommendedName>
</protein>
<organism>
    <name type="scientific">Danio rerio</name>
    <name type="common">Zebrafish</name>
    <name type="synonym">Brachydanio rerio</name>
    <dbReference type="NCBI Taxonomy" id="7955"/>
    <lineage>
        <taxon>Eukaryota</taxon>
        <taxon>Metazoa</taxon>
        <taxon>Chordata</taxon>
        <taxon>Craniata</taxon>
        <taxon>Vertebrata</taxon>
        <taxon>Euteleostomi</taxon>
        <taxon>Actinopterygii</taxon>
        <taxon>Neopterygii</taxon>
        <taxon>Teleostei</taxon>
        <taxon>Ostariophysi</taxon>
        <taxon>Cypriniformes</taxon>
        <taxon>Danionidae</taxon>
        <taxon>Danioninae</taxon>
        <taxon>Danio</taxon>
    </lineage>
</organism>
<evidence type="ECO:0000250" key="1">
    <source>
        <dbReference type="UniProtKB" id="Q9D9V4"/>
    </source>
</evidence>
<evidence type="ECO:0000269" key="2">
    <source>
    </source>
</evidence>
<evidence type="ECO:0000269" key="3">
    <source>
    </source>
</evidence>
<evidence type="ECO:0000305" key="4"/>
<accession>Q5TYW6</accession>
<accession>Q32LV4</accession>
<feature type="chain" id="PRO_0000359748" description="Radial spoke head protein 9 homolog">
    <location>
        <begin position="1"/>
        <end position="277"/>
    </location>
</feature>
<feature type="sequence conflict" description="In Ref. 2; AAI09417." evidence="4" ref="2">
    <original>G</original>
    <variation>E</variation>
    <location>
        <position position="225"/>
    </location>
</feature>
<sequence length="277" mass="30924">MDSDSLHYSLDLAAANGLTLSSEQRAALQSSLLIVKRNYKFSRVLFWGKILGIKSDYFIAQGVEDDELKNRKSLYSLNCVDWHLLPPATESMIADVALAATGRFTGDPSHEYEHTEIRTEGEGDEATHEEVTVKVIEASRLAAIVSNIDKDVSVVPRGAFIKSPNGKVQTNRSFGGLHPTEAAKLRNYLHFREPVNLRNKSILEMSELNPALDFLDPLSEDILKGSWSLQLDRGGTVCVLRSLLWLGFTFFHVPQTPQHGYIYMGDGLMNLDLPFML</sequence>
<keyword id="KW-0966">Cell projection</keyword>
<keyword id="KW-0969">Cilium</keyword>
<keyword id="KW-0970">Cilium biogenesis/degradation</keyword>
<keyword id="KW-0963">Cytoplasm</keyword>
<keyword id="KW-0206">Cytoskeleton</keyword>
<keyword id="KW-0282">Flagellum</keyword>
<keyword id="KW-1185">Reference proteome</keyword>
<gene>
    <name type="primary">rsph9</name>
    <name type="ORF">si:ch211-117l16.2</name>
    <name type="ORF">zgc:123211</name>
</gene>
<dbReference type="EMBL" id="BX649467">
    <property type="protein sequence ID" value="CAH68865.1"/>
    <property type="molecule type" value="Genomic_DNA"/>
</dbReference>
<dbReference type="EMBL" id="BC109416">
    <property type="protein sequence ID" value="AAI09417.1"/>
    <property type="molecule type" value="mRNA"/>
</dbReference>
<dbReference type="RefSeq" id="NP_001025284.1">
    <property type="nucleotide sequence ID" value="NM_001030113.1"/>
</dbReference>
<dbReference type="SMR" id="Q5TYW6"/>
<dbReference type="FunCoup" id="Q5TYW6">
    <property type="interactions" value="119"/>
</dbReference>
<dbReference type="STRING" id="7955.ENSDARP00000017411"/>
<dbReference type="PaxDb" id="7955-ENSDARP00000017411"/>
<dbReference type="Ensembl" id="ENSDART00000010903">
    <property type="protein sequence ID" value="ENSDARP00000017411"/>
    <property type="gene ID" value="ENSDARG00000017355"/>
</dbReference>
<dbReference type="GeneID" id="558005"/>
<dbReference type="KEGG" id="dre:558005"/>
<dbReference type="AGR" id="ZFIN:ZDB-GENE-051120-129"/>
<dbReference type="CTD" id="221421"/>
<dbReference type="ZFIN" id="ZDB-GENE-051120-129">
    <property type="gene designation" value="rsph9"/>
</dbReference>
<dbReference type="eggNOG" id="ENOG502QR99">
    <property type="taxonomic scope" value="Eukaryota"/>
</dbReference>
<dbReference type="HOGENOM" id="CLU_068343_1_0_1"/>
<dbReference type="InParanoid" id="Q5TYW6"/>
<dbReference type="OMA" id="TFYHVPN"/>
<dbReference type="OrthoDB" id="10258956at2759"/>
<dbReference type="PhylomeDB" id="Q5TYW6"/>
<dbReference type="TreeFam" id="TF323644"/>
<dbReference type="PRO" id="PR:Q5TYW6"/>
<dbReference type="Proteomes" id="UP000000437">
    <property type="component" value="Chromosome 4"/>
</dbReference>
<dbReference type="Bgee" id="ENSDARG00000017355">
    <property type="expression patterns" value="Expressed in testis and 17 other cell types or tissues"/>
</dbReference>
<dbReference type="GO" id="GO:0097729">
    <property type="term" value="C:9+2 motile cilium"/>
    <property type="evidence" value="ECO:0000250"/>
    <property type="project" value="UniProtKB"/>
</dbReference>
<dbReference type="GO" id="GO:0005930">
    <property type="term" value="C:axoneme"/>
    <property type="evidence" value="ECO:0000314"/>
    <property type="project" value="ZFIN"/>
</dbReference>
<dbReference type="GO" id="GO:0005929">
    <property type="term" value="C:cilium"/>
    <property type="evidence" value="ECO:0000314"/>
    <property type="project" value="ZFIN"/>
</dbReference>
<dbReference type="GO" id="GO:0060091">
    <property type="term" value="C:kinocilium"/>
    <property type="evidence" value="ECO:0000314"/>
    <property type="project" value="ZFIN"/>
</dbReference>
<dbReference type="GO" id="GO:0031514">
    <property type="term" value="C:motile cilium"/>
    <property type="evidence" value="ECO:0000250"/>
    <property type="project" value="UniProtKB"/>
</dbReference>
<dbReference type="GO" id="GO:0001535">
    <property type="term" value="C:radial spoke head"/>
    <property type="evidence" value="ECO:0000250"/>
    <property type="project" value="UniProtKB"/>
</dbReference>
<dbReference type="GO" id="GO:0036126">
    <property type="term" value="C:sperm flagellum"/>
    <property type="evidence" value="ECO:0000250"/>
    <property type="project" value="UniProtKB"/>
</dbReference>
<dbReference type="GO" id="GO:1904158">
    <property type="term" value="P:axonemal central apparatus assembly"/>
    <property type="evidence" value="ECO:0000250"/>
    <property type="project" value="UniProtKB"/>
</dbReference>
<dbReference type="GO" id="GO:0035082">
    <property type="term" value="P:axoneme assembly"/>
    <property type="evidence" value="ECO:0000315"/>
    <property type="project" value="BHF-UCL"/>
</dbReference>
<dbReference type="GO" id="GO:0060271">
    <property type="term" value="P:cilium assembly"/>
    <property type="evidence" value="ECO:0000315"/>
    <property type="project" value="ZFIN"/>
</dbReference>
<dbReference type="GO" id="GO:0003341">
    <property type="term" value="P:cilium movement"/>
    <property type="evidence" value="ECO:0000315"/>
    <property type="project" value="BHF-UCL"/>
</dbReference>
<dbReference type="GO" id="GO:0060294">
    <property type="term" value="P:cilium movement involved in cell motility"/>
    <property type="evidence" value="ECO:0000318"/>
    <property type="project" value="GO_Central"/>
</dbReference>
<dbReference type="GO" id="GO:0044458">
    <property type="term" value="P:motile cilium assembly"/>
    <property type="evidence" value="ECO:0000318"/>
    <property type="project" value="GO_Central"/>
</dbReference>
<dbReference type="GO" id="GO:0062177">
    <property type="term" value="P:radial spoke assembly"/>
    <property type="evidence" value="ECO:0000250"/>
    <property type="project" value="UniProtKB"/>
</dbReference>
<dbReference type="InterPro" id="IPR006802">
    <property type="entry name" value="Radial_spoke"/>
</dbReference>
<dbReference type="InterPro" id="IPR055316">
    <property type="entry name" value="RSP9"/>
</dbReference>
<dbReference type="PANTHER" id="PTHR22069">
    <property type="entry name" value="MITOCHONDRIAL RIBOSOMAL PROTEIN S18"/>
    <property type="match status" value="1"/>
</dbReference>
<dbReference type="PANTHER" id="PTHR22069:SF0">
    <property type="entry name" value="RADIAL SPOKE HEAD PROTEIN 9 HOMOLOG"/>
    <property type="match status" value="1"/>
</dbReference>
<dbReference type="Pfam" id="PF04712">
    <property type="entry name" value="Radial_spoke"/>
    <property type="match status" value="1"/>
</dbReference>
<comment type="function">
    <text evidence="1 2 3">Functions as part of axonemal radial spoke complexes that play an important part in the motility of sperm and cilia (PubMed:19200523). Required for motility of olfactory and neural cilia and for the structural integrity of ciliary axonemes in both 9+0 and 9+2 motile cilia (PubMed:27687975). Essential for both the radial spoke head assembly and the central pair microtubule stability in ependymal motile cilia (By similarity).</text>
</comment>
<comment type="subunit">
    <text evidence="1">Component of axonemal radial spoke complexes.</text>
</comment>
<comment type="subcellular location">
    <subcellularLocation>
        <location evidence="3">Cytoplasm</location>
        <location evidence="3">Cytoskeleton</location>
        <location evidence="3">Cilium axoneme</location>
    </subcellularLocation>
    <subcellularLocation>
        <location evidence="1">Cytoplasm</location>
        <location evidence="1">Cytoskeleton</location>
        <location evidence="1">Flagellum axoneme</location>
    </subcellularLocation>
    <subcellularLocation>
        <location evidence="3">Cell projection</location>
        <location evidence="3">Kinocilium</location>
    </subcellularLocation>
</comment>
<comment type="developmental stage">
    <text evidence="3">Expressed in ciliated structures in the embryos namely, Kupffer's vesicle, pronephric ducts, otic placodes and ventral spinal cord (at protein level) (PubMed:27687975). Also expressed in the ventral midline of the midbrain primordium (at protein level) (PubMed:27687975).</text>
</comment>
<comment type="disruption phenotype">
    <text evidence="2 3">Dysmotile olfactory pit cilia which have a normal beat frequency but an ineffective circular beat pattern. Effect can be rescued by coinjection of mouse Rsph9 mRNA (PubMed:19200523). Embryos with CRISPR-induced rsph9 null mutations exhibit a greatly diminished olfactory and neural ciliary motility, structural defects in neural and pronephric ciliary axonemes and an impaired initiation of startle response to acoustic stimulation (PubMed:27687975).</text>
</comment>
<comment type="similarity">
    <text evidence="4">Belongs to the flagellar radial spoke RSP9 family.</text>
</comment>
<reference key="1">
    <citation type="journal article" date="2013" name="Nature">
        <title>The zebrafish reference genome sequence and its relationship to the human genome.</title>
        <authorList>
            <person name="Howe K."/>
            <person name="Clark M.D."/>
            <person name="Torroja C.F."/>
            <person name="Torrance J."/>
            <person name="Berthelot C."/>
            <person name="Muffato M."/>
            <person name="Collins J.E."/>
            <person name="Humphray S."/>
            <person name="McLaren K."/>
            <person name="Matthews L."/>
            <person name="McLaren S."/>
            <person name="Sealy I."/>
            <person name="Caccamo M."/>
            <person name="Churcher C."/>
            <person name="Scott C."/>
            <person name="Barrett J.C."/>
            <person name="Koch R."/>
            <person name="Rauch G.J."/>
            <person name="White S."/>
            <person name="Chow W."/>
            <person name="Kilian B."/>
            <person name="Quintais L.T."/>
            <person name="Guerra-Assuncao J.A."/>
            <person name="Zhou Y."/>
            <person name="Gu Y."/>
            <person name="Yen J."/>
            <person name="Vogel J.H."/>
            <person name="Eyre T."/>
            <person name="Redmond S."/>
            <person name="Banerjee R."/>
            <person name="Chi J."/>
            <person name="Fu B."/>
            <person name="Langley E."/>
            <person name="Maguire S.F."/>
            <person name="Laird G.K."/>
            <person name="Lloyd D."/>
            <person name="Kenyon E."/>
            <person name="Donaldson S."/>
            <person name="Sehra H."/>
            <person name="Almeida-King J."/>
            <person name="Loveland J."/>
            <person name="Trevanion S."/>
            <person name="Jones M."/>
            <person name="Quail M."/>
            <person name="Willey D."/>
            <person name="Hunt A."/>
            <person name="Burton J."/>
            <person name="Sims S."/>
            <person name="McLay K."/>
            <person name="Plumb B."/>
            <person name="Davis J."/>
            <person name="Clee C."/>
            <person name="Oliver K."/>
            <person name="Clark R."/>
            <person name="Riddle C."/>
            <person name="Elliot D."/>
            <person name="Threadgold G."/>
            <person name="Harden G."/>
            <person name="Ware D."/>
            <person name="Begum S."/>
            <person name="Mortimore B."/>
            <person name="Kerry G."/>
            <person name="Heath P."/>
            <person name="Phillimore B."/>
            <person name="Tracey A."/>
            <person name="Corby N."/>
            <person name="Dunn M."/>
            <person name="Johnson C."/>
            <person name="Wood J."/>
            <person name="Clark S."/>
            <person name="Pelan S."/>
            <person name="Griffiths G."/>
            <person name="Smith M."/>
            <person name="Glithero R."/>
            <person name="Howden P."/>
            <person name="Barker N."/>
            <person name="Lloyd C."/>
            <person name="Stevens C."/>
            <person name="Harley J."/>
            <person name="Holt K."/>
            <person name="Panagiotidis G."/>
            <person name="Lovell J."/>
            <person name="Beasley H."/>
            <person name="Henderson C."/>
            <person name="Gordon D."/>
            <person name="Auger K."/>
            <person name="Wright D."/>
            <person name="Collins J."/>
            <person name="Raisen C."/>
            <person name="Dyer L."/>
            <person name="Leung K."/>
            <person name="Robertson L."/>
            <person name="Ambridge K."/>
            <person name="Leongamornlert D."/>
            <person name="McGuire S."/>
            <person name="Gilderthorp R."/>
            <person name="Griffiths C."/>
            <person name="Manthravadi D."/>
            <person name="Nichol S."/>
            <person name="Barker G."/>
            <person name="Whitehead S."/>
            <person name="Kay M."/>
            <person name="Brown J."/>
            <person name="Murnane C."/>
            <person name="Gray E."/>
            <person name="Humphries M."/>
            <person name="Sycamore N."/>
            <person name="Barker D."/>
            <person name="Saunders D."/>
            <person name="Wallis J."/>
            <person name="Babbage A."/>
            <person name="Hammond S."/>
            <person name="Mashreghi-Mohammadi M."/>
            <person name="Barr L."/>
            <person name="Martin S."/>
            <person name="Wray P."/>
            <person name="Ellington A."/>
            <person name="Matthews N."/>
            <person name="Ellwood M."/>
            <person name="Woodmansey R."/>
            <person name="Clark G."/>
            <person name="Cooper J."/>
            <person name="Tromans A."/>
            <person name="Grafham D."/>
            <person name="Skuce C."/>
            <person name="Pandian R."/>
            <person name="Andrews R."/>
            <person name="Harrison E."/>
            <person name="Kimberley A."/>
            <person name="Garnett J."/>
            <person name="Fosker N."/>
            <person name="Hall R."/>
            <person name="Garner P."/>
            <person name="Kelly D."/>
            <person name="Bird C."/>
            <person name="Palmer S."/>
            <person name="Gehring I."/>
            <person name="Berger A."/>
            <person name="Dooley C.M."/>
            <person name="Ersan-Urun Z."/>
            <person name="Eser C."/>
            <person name="Geiger H."/>
            <person name="Geisler M."/>
            <person name="Karotki L."/>
            <person name="Kirn A."/>
            <person name="Konantz J."/>
            <person name="Konantz M."/>
            <person name="Oberlander M."/>
            <person name="Rudolph-Geiger S."/>
            <person name="Teucke M."/>
            <person name="Lanz C."/>
            <person name="Raddatz G."/>
            <person name="Osoegawa K."/>
            <person name="Zhu B."/>
            <person name="Rapp A."/>
            <person name="Widaa S."/>
            <person name="Langford C."/>
            <person name="Yang F."/>
            <person name="Schuster S.C."/>
            <person name="Carter N.P."/>
            <person name="Harrow J."/>
            <person name="Ning Z."/>
            <person name="Herrero J."/>
            <person name="Searle S.M."/>
            <person name="Enright A."/>
            <person name="Geisler R."/>
            <person name="Plasterk R.H."/>
            <person name="Lee C."/>
            <person name="Westerfield M."/>
            <person name="de Jong P.J."/>
            <person name="Zon L.I."/>
            <person name="Postlethwait J.H."/>
            <person name="Nusslein-Volhard C."/>
            <person name="Hubbard T.J."/>
            <person name="Roest Crollius H."/>
            <person name="Rogers J."/>
            <person name="Stemple D.L."/>
        </authorList>
    </citation>
    <scope>NUCLEOTIDE SEQUENCE [LARGE SCALE GENOMIC DNA]</scope>
    <source>
        <strain>Tuebingen</strain>
    </source>
</reference>
<reference key="2">
    <citation type="submission" date="2005-11" db="EMBL/GenBank/DDBJ databases">
        <authorList>
            <consortium name="NIH - Zebrafish Gene Collection (ZGC) project"/>
        </authorList>
    </citation>
    <scope>NUCLEOTIDE SEQUENCE [LARGE SCALE MRNA]</scope>
    <source>
        <tissue>Olfactory epithelium</tissue>
    </source>
</reference>
<reference key="3">
    <citation type="journal article" date="2009" name="Am. J. Hum. Genet.">
        <title>Mutations in radial spoke head protein genes RSPH9 and RSPH4A cause primary ciliary dyskinesia with central-microtubular-pair abnormalities.</title>
        <authorList>
            <person name="Castleman V.H."/>
            <person name="Romio L."/>
            <person name="Chodhari R."/>
            <person name="Hirst R.A."/>
            <person name="de Castro S.C.P."/>
            <person name="Parker K.A."/>
            <person name="Ybot-Gonzalez P."/>
            <person name="Emes R.D."/>
            <person name="Wilson S.W."/>
            <person name="Wallis C."/>
            <person name="Johnson C.A."/>
            <person name="Herrera R.J."/>
            <person name="Rutman A."/>
            <person name="Dixon M."/>
            <person name="Shoemark A."/>
            <person name="Bush A."/>
            <person name="Hogg C."/>
            <person name="Gardiner R.M."/>
            <person name="Reish O."/>
            <person name="Greene N.D.E."/>
            <person name="O'Callaghan C."/>
            <person name="Purton S."/>
            <person name="Chung E.M.K."/>
            <person name="Mitchison H.M."/>
        </authorList>
    </citation>
    <scope>DISRUPTION PHENOTYPE</scope>
    <scope>FUNCTION</scope>
</reference>
<reference key="4">
    <citation type="journal article" date="2016" name="Sci. Rep.">
        <title>Novel roles for the radial spoke head protein 9 in neural and neurosensory cilia.</title>
        <authorList>
            <person name="Sedykh I."/>
            <person name="TeSlaa J.J."/>
            <person name="Tatarsky R.L."/>
            <person name="Keller A.N."/>
            <person name="Toops K.A."/>
            <person name="Lakkaraju A."/>
            <person name="Nyholm M.K."/>
            <person name="Wolman M.A."/>
            <person name="Grinblat Y."/>
        </authorList>
    </citation>
    <scope>FUNCTION</scope>
    <scope>SUBCELLULAR LOCATION</scope>
    <scope>DISRUPTION PHENOTYPE</scope>
    <scope>DEVELOPMENTAL STAGE</scope>
</reference>
<proteinExistence type="evidence at protein level"/>
<name>RSPH9_DANRE</name>